<proteinExistence type="inferred from homology"/>
<reference key="1">
    <citation type="journal article" date="2004" name="Nature">
        <title>Genome sequence of the Brown Norway rat yields insights into mammalian evolution.</title>
        <authorList>
            <person name="Gibbs R.A."/>
            <person name="Weinstock G.M."/>
            <person name="Metzker M.L."/>
            <person name="Muzny D.M."/>
            <person name="Sodergren E.J."/>
            <person name="Scherer S."/>
            <person name="Scott G."/>
            <person name="Steffen D."/>
            <person name="Worley K.C."/>
            <person name="Burch P.E."/>
            <person name="Okwuonu G."/>
            <person name="Hines S."/>
            <person name="Lewis L."/>
            <person name="Deramo C."/>
            <person name="Delgado O."/>
            <person name="Dugan-Rocha S."/>
            <person name="Miner G."/>
            <person name="Morgan M."/>
            <person name="Hawes A."/>
            <person name="Gill R."/>
            <person name="Holt R.A."/>
            <person name="Adams M.D."/>
            <person name="Amanatides P.G."/>
            <person name="Baden-Tillson H."/>
            <person name="Barnstead M."/>
            <person name="Chin S."/>
            <person name="Evans C.A."/>
            <person name="Ferriera S."/>
            <person name="Fosler C."/>
            <person name="Glodek A."/>
            <person name="Gu Z."/>
            <person name="Jennings D."/>
            <person name="Kraft C.L."/>
            <person name="Nguyen T."/>
            <person name="Pfannkoch C.M."/>
            <person name="Sitter C."/>
            <person name="Sutton G.G."/>
            <person name="Venter J.C."/>
            <person name="Woodage T."/>
            <person name="Smith D."/>
            <person name="Lee H.-M."/>
            <person name="Gustafson E."/>
            <person name="Cahill P."/>
            <person name="Kana A."/>
            <person name="Doucette-Stamm L."/>
            <person name="Weinstock K."/>
            <person name="Fechtel K."/>
            <person name="Weiss R.B."/>
            <person name="Dunn D.M."/>
            <person name="Green E.D."/>
            <person name="Blakesley R.W."/>
            <person name="Bouffard G.G."/>
            <person name="De Jong P.J."/>
            <person name="Osoegawa K."/>
            <person name="Zhu B."/>
            <person name="Marra M."/>
            <person name="Schein J."/>
            <person name="Bosdet I."/>
            <person name="Fjell C."/>
            <person name="Jones S."/>
            <person name="Krzywinski M."/>
            <person name="Mathewson C."/>
            <person name="Siddiqui A."/>
            <person name="Wye N."/>
            <person name="McPherson J."/>
            <person name="Zhao S."/>
            <person name="Fraser C.M."/>
            <person name="Shetty J."/>
            <person name="Shatsman S."/>
            <person name="Geer K."/>
            <person name="Chen Y."/>
            <person name="Abramzon S."/>
            <person name="Nierman W.C."/>
            <person name="Havlak P.H."/>
            <person name="Chen R."/>
            <person name="Durbin K.J."/>
            <person name="Egan A."/>
            <person name="Ren Y."/>
            <person name="Song X.-Z."/>
            <person name="Li B."/>
            <person name="Liu Y."/>
            <person name="Qin X."/>
            <person name="Cawley S."/>
            <person name="Cooney A.J."/>
            <person name="D'Souza L.M."/>
            <person name="Martin K."/>
            <person name="Wu J.Q."/>
            <person name="Gonzalez-Garay M.L."/>
            <person name="Jackson A.R."/>
            <person name="Kalafus K.J."/>
            <person name="McLeod M.P."/>
            <person name="Milosavljevic A."/>
            <person name="Virk D."/>
            <person name="Volkov A."/>
            <person name="Wheeler D.A."/>
            <person name="Zhang Z."/>
            <person name="Bailey J.A."/>
            <person name="Eichler E.E."/>
            <person name="Tuzun E."/>
            <person name="Birney E."/>
            <person name="Mongin E."/>
            <person name="Ureta-Vidal A."/>
            <person name="Woodwark C."/>
            <person name="Zdobnov E."/>
            <person name="Bork P."/>
            <person name="Suyama M."/>
            <person name="Torrents D."/>
            <person name="Alexandersson M."/>
            <person name="Trask B.J."/>
            <person name="Young J.M."/>
            <person name="Huang H."/>
            <person name="Wang H."/>
            <person name="Xing H."/>
            <person name="Daniels S."/>
            <person name="Gietzen D."/>
            <person name="Schmidt J."/>
            <person name="Stevens K."/>
            <person name="Vitt U."/>
            <person name="Wingrove J."/>
            <person name="Camara F."/>
            <person name="Mar Alba M."/>
            <person name="Abril J.F."/>
            <person name="Guigo R."/>
            <person name="Smit A."/>
            <person name="Dubchak I."/>
            <person name="Rubin E.M."/>
            <person name="Couronne O."/>
            <person name="Poliakov A."/>
            <person name="Huebner N."/>
            <person name="Ganten D."/>
            <person name="Goesele C."/>
            <person name="Hummel O."/>
            <person name="Kreitler T."/>
            <person name="Lee Y.-A."/>
            <person name="Monti J."/>
            <person name="Schulz H."/>
            <person name="Zimdahl H."/>
            <person name="Himmelbauer H."/>
            <person name="Lehrach H."/>
            <person name="Jacob H.J."/>
            <person name="Bromberg S."/>
            <person name="Gullings-Handley J."/>
            <person name="Jensen-Seaman M.I."/>
            <person name="Kwitek A.E."/>
            <person name="Lazar J."/>
            <person name="Pasko D."/>
            <person name="Tonellato P.J."/>
            <person name="Twigger S."/>
            <person name="Ponting C.P."/>
            <person name="Duarte J.M."/>
            <person name="Rice S."/>
            <person name="Goodstadt L."/>
            <person name="Beatson S.A."/>
            <person name="Emes R.D."/>
            <person name="Winter E.E."/>
            <person name="Webber C."/>
            <person name="Brandt P."/>
            <person name="Nyakatura G."/>
            <person name="Adetobi M."/>
            <person name="Chiaromonte F."/>
            <person name="Elnitski L."/>
            <person name="Eswara P."/>
            <person name="Hardison R.C."/>
            <person name="Hou M."/>
            <person name="Kolbe D."/>
            <person name="Makova K."/>
            <person name="Miller W."/>
            <person name="Nekrutenko A."/>
            <person name="Riemer C."/>
            <person name="Schwartz S."/>
            <person name="Taylor J."/>
            <person name="Yang S."/>
            <person name="Zhang Y."/>
            <person name="Lindpaintner K."/>
            <person name="Andrews T.D."/>
            <person name="Caccamo M."/>
            <person name="Clamp M."/>
            <person name="Clarke L."/>
            <person name="Curwen V."/>
            <person name="Durbin R.M."/>
            <person name="Eyras E."/>
            <person name="Searle S.M."/>
            <person name="Cooper G.M."/>
            <person name="Batzoglou S."/>
            <person name="Brudno M."/>
            <person name="Sidow A."/>
            <person name="Stone E.A."/>
            <person name="Payseur B.A."/>
            <person name="Bourque G."/>
            <person name="Lopez-Otin C."/>
            <person name="Puente X.S."/>
            <person name="Chakrabarti K."/>
            <person name="Chatterji S."/>
            <person name="Dewey C."/>
            <person name="Pachter L."/>
            <person name="Bray N."/>
            <person name="Yap V.B."/>
            <person name="Caspi A."/>
            <person name="Tesler G."/>
            <person name="Pevzner P.A."/>
            <person name="Haussler D."/>
            <person name="Roskin K.M."/>
            <person name="Baertsch R."/>
            <person name="Clawson H."/>
            <person name="Furey T.S."/>
            <person name="Hinrichs A.S."/>
            <person name="Karolchik D."/>
            <person name="Kent W.J."/>
            <person name="Rosenbloom K.R."/>
            <person name="Trumbower H."/>
            <person name="Weirauch M."/>
            <person name="Cooper D.N."/>
            <person name="Stenson P.D."/>
            <person name="Ma B."/>
            <person name="Brent M."/>
            <person name="Arumugam M."/>
            <person name="Shteynberg D."/>
            <person name="Copley R.R."/>
            <person name="Taylor M.S."/>
            <person name="Riethman H."/>
            <person name="Mudunuri U."/>
            <person name="Peterson J."/>
            <person name="Guyer M."/>
            <person name="Felsenfeld A."/>
            <person name="Old S."/>
            <person name="Mockrin S."/>
            <person name="Collins F.S."/>
        </authorList>
    </citation>
    <scope>NUCLEOTIDE SEQUENCE [LARGE SCALE GENOMIC DNA]</scope>
    <source>
        <strain>Brown Norway</strain>
    </source>
</reference>
<protein>
    <recommendedName>
        <fullName evidence="3">Aurora kinase A- and ninein-interacting protein</fullName>
    </recommendedName>
</protein>
<organism>
    <name type="scientific">Rattus norvegicus</name>
    <name type="common">Rat</name>
    <dbReference type="NCBI Taxonomy" id="10116"/>
    <lineage>
        <taxon>Eukaryota</taxon>
        <taxon>Metazoa</taxon>
        <taxon>Chordata</taxon>
        <taxon>Craniata</taxon>
        <taxon>Vertebrata</taxon>
        <taxon>Euteleostomi</taxon>
        <taxon>Mammalia</taxon>
        <taxon>Eutheria</taxon>
        <taxon>Euarchontoglires</taxon>
        <taxon>Glires</taxon>
        <taxon>Rodentia</taxon>
        <taxon>Myomorpha</taxon>
        <taxon>Muroidea</taxon>
        <taxon>Muridae</taxon>
        <taxon>Murinae</taxon>
        <taxon>Rattus</taxon>
    </lineage>
</organism>
<accession>D3ZUC4</accession>
<feature type="chain" id="PRO_0000419631" description="Aurora kinase A- and ninein-interacting protein">
    <location>
        <begin position="1"/>
        <end position="347"/>
    </location>
</feature>
<feature type="region of interest" description="Interaction with AURKA" evidence="1">
    <location>
        <begin position="182"/>
        <end position="347"/>
    </location>
</feature>
<feature type="region of interest" description="Interaction with RBBP8/CtIP" evidence="1">
    <location>
        <begin position="273"/>
        <end position="347"/>
    </location>
</feature>
<feature type="region of interest" description="Disordered" evidence="2">
    <location>
        <begin position="301"/>
        <end position="325"/>
    </location>
</feature>
<feature type="compositionally biased region" description="Polar residues" evidence="2">
    <location>
        <begin position="301"/>
        <end position="322"/>
    </location>
</feature>
<feature type="modified residue" description="Phosphoserine" evidence="1">
    <location>
        <position position="284"/>
    </location>
</feature>
<name>AUNIP_RAT</name>
<dbReference type="EMBL" id="AABR06040351">
    <property type="status" value="NOT_ANNOTATED_CDS"/>
    <property type="molecule type" value="Genomic_DNA"/>
</dbReference>
<dbReference type="RefSeq" id="NP_001386265.1">
    <property type="nucleotide sequence ID" value="NM_001399336.1"/>
</dbReference>
<dbReference type="RefSeq" id="XP_001071529.1">
    <property type="nucleotide sequence ID" value="XM_001071529.4"/>
</dbReference>
<dbReference type="RefSeq" id="XP_002726684.1">
    <property type="nucleotide sequence ID" value="XM_002726638.4"/>
</dbReference>
<dbReference type="FunCoup" id="D3ZUC4">
    <property type="interactions" value="276"/>
</dbReference>
<dbReference type="STRING" id="10116.ENSRNOP00000032347"/>
<dbReference type="PhosphoSitePlus" id="D3ZUC4"/>
<dbReference type="PaxDb" id="10116-ENSRNOP00000032347"/>
<dbReference type="Ensembl" id="ENSRNOT00000039322.4">
    <property type="protein sequence ID" value="ENSRNOP00000032347.3"/>
    <property type="gene ID" value="ENSRNOG00000022030.4"/>
</dbReference>
<dbReference type="GeneID" id="689656"/>
<dbReference type="UCSC" id="RGD:1589922">
    <property type="organism name" value="rat"/>
</dbReference>
<dbReference type="AGR" id="RGD:1589922"/>
<dbReference type="RGD" id="1589922">
    <property type="gene designation" value="Aunip"/>
</dbReference>
<dbReference type="eggNOG" id="ENOG502SFBZ">
    <property type="taxonomic scope" value="Eukaryota"/>
</dbReference>
<dbReference type="GeneTree" id="ENSGT00390000003280"/>
<dbReference type="HOGENOM" id="CLU_835590_0_0_1"/>
<dbReference type="InParanoid" id="D3ZUC4"/>
<dbReference type="PhylomeDB" id="D3ZUC4"/>
<dbReference type="TreeFam" id="TF337334"/>
<dbReference type="PRO" id="PR:D3ZUC4"/>
<dbReference type="Proteomes" id="UP000002494">
    <property type="component" value="Chromosome 5"/>
</dbReference>
<dbReference type="Bgee" id="ENSRNOG00000022030">
    <property type="expression patterns" value="Expressed in testis and 14 other cell types or tissues"/>
</dbReference>
<dbReference type="GO" id="GO:0005813">
    <property type="term" value="C:centrosome"/>
    <property type="evidence" value="ECO:0000250"/>
    <property type="project" value="UniProtKB"/>
</dbReference>
<dbReference type="GO" id="GO:0005737">
    <property type="term" value="C:cytoplasm"/>
    <property type="evidence" value="ECO:0007669"/>
    <property type="project" value="UniProtKB-KW"/>
</dbReference>
<dbReference type="GO" id="GO:0005634">
    <property type="term" value="C:nucleus"/>
    <property type="evidence" value="ECO:0007669"/>
    <property type="project" value="UniProtKB-SubCell"/>
</dbReference>
<dbReference type="GO" id="GO:0090734">
    <property type="term" value="C:site of DNA damage"/>
    <property type="evidence" value="ECO:0000250"/>
    <property type="project" value="UniProtKB"/>
</dbReference>
<dbReference type="GO" id="GO:0000922">
    <property type="term" value="C:spindle pole"/>
    <property type="evidence" value="ECO:0000250"/>
    <property type="project" value="UniProtKB"/>
</dbReference>
<dbReference type="GO" id="GO:0003684">
    <property type="term" value="F:damaged DNA binding"/>
    <property type="evidence" value="ECO:0000250"/>
    <property type="project" value="UniProtKB"/>
</dbReference>
<dbReference type="GO" id="GO:0000724">
    <property type="term" value="P:double-strand break repair via homologous recombination"/>
    <property type="evidence" value="ECO:0000250"/>
    <property type="project" value="UniProtKB"/>
</dbReference>
<dbReference type="GO" id="GO:2001033">
    <property type="term" value="P:negative regulation of double-strand break repair via nonhomologous end joining"/>
    <property type="evidence" value="ECO:0000250"/>
    <property type="project" value="UniProtKB"/>
</dbReference>
<dbReference type="GO" id="GO:0007051">
    <property type="term" value="P:spindle organization"/>
    <property type="evidence" value="ECO:0000250"/>
    <property type="project" value="UniProtKB"/>
</dbReference>
<dbReference type="InterPro" id="IPR029286">
    <property type="entry name" value="AUNIP"/>
</dbReference>
<dbReference type="PANTHER" id="PTHR14526">
    <property type="entry name" value="AURORA KINASE A AND NINEIN-INTERACTING PROTEIN"/>
    <property type="match status" value="1"/>
</dbReference>
<dbReference type="PANTHER" id="PTHR14526:SF2">
    <property type="entry name" value="AURORA KINASE A AND NINEIN-INTERACTING PROTEIN"/>
    <property type="match status" value="1"/>
</dbReference>
<dbReference type="Pfam" id="PF15334">
    <property type="entry name" value="AIB"/>
    <property type="match status" value="1"/>
</dbReference>
<gene>
    <name evidence="4" type="primary">Aunip</name>
</gene>
<sequence>MSRRGPEEEACGVWLDAAALKRQKMQTHLLKLGTKMLTLLPGERKPSIPFTQRRATRQTSITSFVTSQPGMANGGNQKNASSLKENQINRECKSRSQLDCLDQGLEDDCLVSPLATSTPADIREAGHSPQSSQISGCQSLETTSLTMMSFPQPVVLMGTGESKAPLASSFTQFLERSCLLDQREAKRKREGLCGSKTDCPGMGSHIRPPGGKCHQPLDKAKVEKRATAKENRQAPVHLQTYRFGSHSGKKTLLVTKSPCPLSVFSWDIDRKDRDSWSQLFTEDSQGHQVIAHSTKMPFQDVTNARNQGSGQFPDSPQAQGQDGPTLLHLQPHLLFTQDSEGNRVIRH</sequence>
<keyword id="KW-0158">Chromosome</keyword>
<keyword id="KW-0963">Cytoplasm</keyword>
<keyword id="KW-0206">Cytoskeleton</keyword>
<keyword id="KW-0227">DNA damage</keyword>
<keyword id="KW-0234">DNA repair</keyword>
<keyword id="KW-0238">DNA-binding</keyword>
<keyword id="KW-0539">Nucleus</keyword>
<keyword id="KW-0597">Phosphoprotein</keyword>
<keyword id="KW-1185">Reference proteome</keyword>
<evidence type="ECO:0000250" key="1">
    <source>
        <dbReference type="UniProtKB" id="Q9H7T9"/>
    </source>
</evidence>
<evidence type="ECO:0000256" key="2">
    <source>
        <dbReference type="SAM" id="MobiDB-lite"/>
    </source>
</evidence>
<evidence type="ECO:0000305" key="3"/>
<evidence type="ECO:0000312" key="4">
    <source>
        <dbReference type="RGD" id="1589922"/>
    </source>
</evidence>
<comment type="function">
    <text evidence="1">DNA-binding protein that accumulates at DNA double-strand breaks (DSBs) following DNA damage and promotes DNA resection and homologous recombination. Serves as a sensor of DNA damage: binds DNA with a strong preference for DNA substrates that mimic structures generated at stalled replication forks, and anchors RBBP8/CtIP to DSB sites to promote DNA end resection and ensuing homologous recombination repair. Inhibits non-homologous end joining (NHEJ). Required for the dynamic movement of AURKA at the centrosomes and spindle apparatus during the cell cycle.</text>
</comment>
<comment type="subunit">
    <text evidence="1">Interacts (via C-terminus) with AURKA (via C-terminus). Interacts (via N-terminus) with NIN; this interaction blocks NIN phosphorylation by both AURKA and GSK3B. Identified in a complex with NIN and AURKA. Interacts with RBBP8/CtIP.</text>
</comment>
<comment type="subcellular location">
    <subcellularLocation>
        <location evidence="1">Nucleus</location>
    </subcellularLocation>
    <subcellularLocation>
        <location evidence="1">Chromosome</location>
    </subcellularLocation>
    <subcellularLocation>
        <location evidence="1">Cytoplasm</location>
        <location evidence="1">Cytoskeleton</location>
        <location evidence="1">Microtubule organizing center</location>
        <location evidence="1">Centrosome</location>
    </subcellularLocation>
    <subcellularLocation>
        <location evidence="1">Cytoplasm</location>
        <location evidence="1">Cytoskeleton</location>
        <location evidence="1">Spindle pole</location>
    </subcellularLocation>
    <text evidence="1">Accumulates at sites of DNA damage by binding to DNA substrates that mimick structures generated at stalled replication forks. Localizes to the centrosome in interphase and to the spindle pole in metaphase.</text>
</comment>
<comment type="similarity">
    <text evidence="3">Belongs to the AUNIP family.</text>
</comment>